<accession>B7MI07</accession>
<dbReference type="EC" id="3.4.11.23" evidence="1"/>
<dbReference type="EMBL" id="CU928161">
    <property type="protein sequence ID" value="CAR03965.1"/>
    <property type="molecule type" value="Genomic_DNA"/>
</dbReference>
<dbReference type="RefSeq" id="WP_000133562.1">
    <property type="nucleotide sequence ID" value="NC_011742.1"/>
</dbReference>
<dbReference type="SMR" id="B7MI07"/>
<dbReference type="MEROPS" id="M17.004"/>
<dbReference type="KEGG" id="ecz:ECS88_2699"/>
<dbReference type="HOGENOM" id="CLU_013734_7_1_6"/>
<dbReference type="Proteomes" id="UP000000747">
    <property type="component" value="Chromosome"/>
</dbReference>
<dbReference type="GO" id="GO:0005737">
    <property type="term" value="C:cytoplasm"/>
    <property type="evidence" value="ECO:0007669"/>
    <property type="project" value="UniProtKB-SubCell"/>
</dbReference>
<dbReference type="GO" id="GO:0030145">
    <property type="term" value="F:manganese ion binding"/>
    <property type="evidence" value="ECO:0007669"/>
    <property type="project" value="UniProtKB-UniRule"/>
</dbReference>
<dbReference type="GO" id="GO:0070006">
    <property type="term" value="F:metalloaminopeptidase activity"/>
    <property type="evidence" value="ECO:0007669"/>
    <property type="project" value="InterPro"/>
</dbReference>
<dbReference type="GO" id="GO:0006508">
    <property type="term" value="P:proteolysis"/>
    <property type="evidence" value="ECO:0007669"/>
    <property type="project" value="UniProtKB-UniRule"/>
</dbReference>
<dbReference type="CDD" id="cd00433">
    <property type="entry name" value="Peptidase_M17"/>
    <property type="match status" value="1"/>
</dbReference>
<dbReference type="FunFam" id="3.40.630.10:FF:000037">
    <property type="entry name" value="Peptidase B"/>
    <property type="match status" value="1"/>
</dbReference>
<dbReference type="Gene3D" id="3.40.630.10">
    <property type="entry name" value="Zn peptidases"/>
    <property type="match status" value="1"/>
</dbReference>
<dbReference type="HAMAP" id="MF_00504">
    <property type="entry name" value="Aminopeptidase_M17"/>
    <property type="match status" value="1"/>
</dbReference>
<dbReference type="InterPro" id="IPR011356">
    <property type="entry name" value="Leucine_aapep/pepB"/>
</dbReference>
<dbReference type="InterPro" id="IPR047620">
    <property type="entry name" value="M17_PepB-like_N"/>
</dbReference>
<dbReference type="InterPro" id="IPR008330">
    <property type="entry name" value="Pept_M17_PepB"/>
</dbReference>
<dbReference type="InterPro" id="IPR000819">
    <property type="entry name" value="Peptidase_M17_C"/>
</dbReference>
<dbReference type="NCBIfam" id="NF003450">
    <property type="entry name" value="PRK05015.1"/>
    <property type="match status" value="1"/>
</dbReference>
<dbReference type="PANTHER" id="PTHR11963">
    <property type="entry name" value="LEUCINE AMINOPEPTIDASE-RELATED"/>
    <property type="match status" value="1"/>
</dbReference>
<dbReference type="PANTHER" id="PTHR11963:SF20">
    <property type="entry name" value="PEPTIDASE B"/>
    <property type="match status" value="1"/>
</dbReference>
<dbReference type="Pfam" id="PF12404">
    <property type="entry name" value="DUF3663"/>
    <property type="match status" value="1"/>
</dbReference>
<dbReference type="Pfam" id="PF00883">
    <property type="entry name" value="Peptidase_M17"/>
    <property type="match status" value="1"/>
</dbReference>
<dbReference type="PIRSF" id="PIRSF036388">
    <property type="entry name" value="Ctsl_amnpptdse_B"/>
    <property type="match status" value="1"/>
</dbReference>
<dbReference type="PRINTS" id="PR00481">
    <property type="entry name" value="LAMNOPPTDASE"/>
</dbReference>
<dbReference type="SUPFAM" id="SSF53187">
    <property type="entry name" value="Zn-dependent exopeptidases"/>
    <property type="match status" value="1"/>
</dbReference>
<dbReference type="PROSITE" id="PS00631">
    <property type="entry name" value="CYTOSOL_AP"/>
    <property type="match status" value="1"/>
</dbReference>
<organism>
    <name type="scientific">Escherichia coli O45:K1 (strain S88 / ExPEC)</name>
    <dbReference type="NCBI Taxonomy" id="585035"/>
    <lineage>
        <taxon>Bacteria</taxon>
        <taxon>Pseudomonadati</taxon>
        <taxon>Pseudomonadota</taxon>
        <taxon>Gammaproteobacteria</taxon>
        <taxon>Enterobacterales</taxon>
        <taxon>Enterobacteriaceae</taxon>
        <taxon>Escherichia</taxon>
    </lineage>
</organism>
<keyword id="KW-0031">Aminopeptidase</keyword>
<keyword id="KW-0963">Cytoplasm</keyword>
<keyword id="KW-0378">Hydrolase</keyword>
<keyword id="KW-0464">Manganese</keyword>
<keyword id="KW-0479">Metal-binding</keyword>
<keyword id="KW-0645">Protease</keyword>
<keyword id="KW-1185">Reference proteome</keyword>
<gene>
    <name evidence="1" type="primary">pepB</name>
    <name type="ordered locus">ECS88_2699</name>
</gene>
<protein>
    <recommendedName>
        <fullName evidence="1">Peptidase B</fullName>
        <ecNumber evidence="1">3.4.11.23</ecNumber>
    </recommendedName>
    <alternativeName>
        <fullName evidence="1">Aminopeptidase B</fullName>
    </alternativeName>
</protein>
<feature type="chain" id="PRO_1000127002" description="Peptidase B">
    <location>
        <begin position="1"/>
        <end position="427"/>
    </location>
</feature>
<feature type="active site" evidence="1">
    <location>
        <position position="207"/>
    </location>
</feature>
<feature type="active site" evidence="1">
    <location>
        <position position="281"/>
    </location>
</feature>
<feature type="binding site" evidence="1">
    <location>
        <position position="195"/>
    </location>
    <ligand>
        <name>Mn(2+)</name>
        <dbReference type="ChEBI" id="CHEBI:29035"/>
        <label>2</label>
    </ligand>
</feature>
<feature type="binding site" evidence="1">
    <location>
        <position position="200"/>
    </location>
    <ligand>
        <name>Mn(2+)</name>
        <dbReference type="ChEBI" id="CHEBI:29035"/>
        <label>1</label>
    </ligand>
</feature>
<feature type="binding site" evidence="1">
    <location>
        <position position="200"/>
    </location>
    <ligand>
        <name>Mn(2+)</name>
        <dbReference type="ChEBI" id="CHEBI:29035"/>
        <label>2</label>
    </ligand>
</feature>
<feature type="binding site" evidence="1">
    <location>
        <position position="218"/>
    </location>
    <ligand>
        <name>Mn(2+)</name>
        <dbReference type="ChEBI" id="CHEBI:29035"/>
        <label>2</label>
    </ligand>
</feature>
<feature type="binding site" evidence="1">
    <location>
        <position position="277"/>
    </location>
    <ligand>
        <name>Mn(2+)</name>
        <dbReference type="ChEBI" id="CHEBI:29035"/>
        <label>1</label>
    </ligand>
</feature>
<feature type="binding site" evidence="1">
    <location>
        <position position="279"/>
    </location>
    <ligand>
        <name>Mn(2+)</name>
        <dbReference type="ChEBI" id="CHEBI:29035"/>
        <label>1</label>
    </ligand>
</feature>
<feature type="binding site" evidence="1">
    <location>
        <position position="279"/>
    </location>
    <ligand>
        <name>Mn(2+)</name>
        <dbReference type="ChEBI" id="CHEBI:29035"/>
        <label>2</label>
    </ligand>
</feature>
<comment type="function">
    <text evidence="1">Probably plays an important role in intracellular peptide degradation.</text>
</comment>
<comment type="catalytic activity">
    <reaction evidence="1">
        <text>Release of an N-terminal amino acid, Xaa, from a peptide or arylamide. Xaa is preferably Glu or Asp but may be other amino acids, including Leu, Met, His, Cys and Gln.</text>
        <dbReference type="EC" id="3.4.11.23"/>
    </reaction>
</comment>
<comment type="cofactor">
    <cofactor evidence="1">
        <name>Mn(2+)</name>
        <dbReference type="ChEBI" id="CHEBI:29035"/>
    </cofactor>
    <text evidence="1">Binds 2 manganese ions per subunit.</text>
</comment>
<comment type="subunit">
    <text evidence="1">Homohexamer.</text>
</comment>
<comment type="subcellular location">
    <subcellularLocation>
        <location evidence="1">Cytoplasm</location>
    </subcellularLocation>
</comment>
<comment type="similarity">
    <text evidence="1">Belongs to the peptidase M17 family.</text>
</comment>
<name>PEPB_ECO45</name>
<reference key="1">
    <citation type="journal article" date="2009" name="PLoS Genet.">
        <title>Organised genome dynamics in the Escherichia coli species results in highly diverse adaptive paths.</title>
        <authorList>
            <person name="Touchon M."/>
            <person name="Hoede C."/>
            <person name="Tenaillon O."/>
            <person name="Barbe V."/>
            <person name="Baeriswyl S."/>
            <person name="Bidet P."/>
            <person name="Bingen E."/>
            <person name="Bonacorsi S."/>
            <person name="Bouchier C."/>
            <person name="Bouvet O."/>
            <person name="Calteau A."/>
            <person name="Chiapello H."/>
            <person name="Clermont O."/>
            <person name="Cruveiller S."/>
            <person name="Danchin A."/>
            <person name="Diard M."/>
            <person name="Dossat C."/>
            <person name="Karoui M.E."/>
            <person name="Frapy E."/>
            <person name="Garry L."/>
            <person name="Ghigo J.M."/>
            <person name="Gilles A.M."/>
            <person name="Johnson J."/>
            <person name="Le Bouguenec C."/>
            <person name="Lescat M."/>
            <person name="Mangenot S."/>
            <person name="Martinez-Jehanne V."/>
            <person name="Matic I."/>
            <person name="Nassif X."/>
            <person name="Oztas S."/>
            <person name="Petit M.A."/>
            <person name="Pichon C."/>
            <person name="Rouy Z."/>
            <person name="Ruf C.S."/>
            <person name="Schneider D."/>
            <person name="Tourret J."/>
            <person name="Vacherie B."/>
            <person name="Vallenet D."/>
            <person name="Medigue C."/>
            <person name="Rocha E.P.C."/>
            <person name="Denamur E."/>
        </authorList>
    </citation>
    <scope>NUCLEOTIDE SEQUENCE [LARGE SCALE GENOMIC DNA]</scope>
    <source>
        <strain>S88 / ExPEC</strain>
    </source>
</reference>
<proteinExistence type="inferred from homology"/>
<sequence length="427" mass="46231">MTEAMKITLSTQPADARWGEKATYSINNDGITLHLNGADDLGLIQRAARKIDGLGIKHVQLSGEGWDADRCWAFWQGYKAPKGIRKVEWPDLDDAQRQELDNRLMIIDWVRDTINAPAEELGPSQLAQRAVDLISNVAGDRVTYRITKGEDLREQGYMGLHTVGRGSERSPVLLALDYNPTGDKEAPVYACLVGKGITFDSGGYSIKQTAFMDSMKSDMGGAATVTGALAFAITRGLNKRVKLFLCCADNLISGNAFKLGDIITYRNGKKVEVMNTDAEGRLVLADGLIDASAQKPELIIDAATLTGAAKTALGNDYHALFSFDDALAGRLLASAAQENEPFWRLPLAEFHRNQLPSNFAELNNTGSAAYPAGASTAAGFLSHFVENYQQGWLHIDCSATYRKAPVEQWSAGATGLGVRTIANLLTA</sequence>
<evidence type="ECO:0000255" key="1">
    <source>
        <dbReference type="HAMAP-Rule" id="MF_00504"/>
    </source>
</evidence>